<reference key="1">
    <citation type="journal article" date="2004" name="Nat. Biotechnol.">
        <title>Complete sequence and comparative genome analysis of the dairy bacterium Streptococcus thermophilus.</title>
        <authorList>
            <person name="Bolotin A."/>
            <person name="Quinquis B."/>
            <person name="Renault P."/>
            <person name="Sorokin A."/>
            <person name="Ehrlich S.D."/>
            <person name="Kulakauskas S."/>
            <person name="Lapidus A."/>
            <person name="Goltsman E."/>
            <person name="Mazur M."/>
            <person name="Pusch G.D."/>
            <person name="Fonstein M."/>
            <person name="Overbeek R."/>
            <person name="Kyprides N."/>
            <person name="Purnelle B."/>
            <person name="Prozzi D."/>
            <person name="Ngui K."/>
            <person name="Masuy D."/>
            <person name="Hancy F."/>
            <person name="Burteau S."/>
            <person name="Boutry M."/>
            <person name="Delcour J."/>
            <person name="Goffeau A."/>
            <person name="Hols P."/>
        </authorList>
    </citation>
    <scope>NUCLEOTIDE SEQUENCE [LARGE SCALE GENOMIC DNA]</scope>
    <source>
        <strain>ATCC BAA-250 / LMG 18311</strain>
    </source>
</reference>
<gene>
    <name evidence="1" type="primary">mnmG</name>
    <name evidence="1" type="synonym">gidA</name>
    <name type="ordered locus">stu2002</name>
</gene>
<sequence length="633" mass="70432">MSYEFDENFDVIVVGAGHAGVEASLAAARMGCKVLLATINLEMLAFMPCNPSIGGSAKGIVVREIDALGGEMGKNIDKTYIQMKMLNTGKGPAVRALRAQADKALYAMTMKHTVERQENLTLRQSMVDEILVEDSKVVGVRTATNQKYGAKAVVVTTGTALRGEIIIGDLKYSSGPNNSLASVTLADNLKELGLEIGRFKTGTPPRVKASSINYEETEIQPGDEKPNHFSFLSKDEDYLQDQIPCWLTYTNQESHDIINNNLHRAPMFSGIVKGVGPRYCPSIEDKIVRFADKNRHQLFLEPEGRETEEVYVQGLSTSLPEDVQKELIHSIKGLEKAEMIRTGYAIEYDIVLPHQLRATLETKLISGLFTAGQTNGTSGYEEAAGQGLVAGINAALKVQGKPELILKRSDAYIGVMIDDLVTKGTLEPYRLLTSRAEYRLILRHDNADMRLTPIGREVGLVDDERWNIFKIKKNQFDRELTRLSKEKLKPIKETNEKIQALGFKPLTDAMTAKEFMRRPEIDYATATQFVGPAAEDLDAKVIELLETEIKYEGYINKALDQVAKMKRMEEKKIPENIDWDAIDSIATEARQKFKKINPETIGQASRISGVNPADISILMVYLEGNNKARRKVD</sequence>
<protein>
    <recommendedName>
        <fullName evidence="1">tRNA uridine 5-carboxymethylaminomethyl modification enzyme MnmG</fullName>
    </recommendedName>
    <alternativeName>
        <fullName evidence="1">Glucose-inhibited division protein A</fullName>
    </alternativeName>
</protein>
<name>MNMG_STRT2</name>
<dbReference type="EMBL" id="CP000023">
    <property type="protein sequence ID" value="AAV61596.1"/>
    <property type="status" value="ALT_INIT"/>
    <property type="molecule type" value="Genomic_DNA"/>
</dbReference>
<dbReference type="RefSeq" id="WP_041827119.1">
    <property type="nucleotide sequence ID" value="NC_006448.1"/>
</dbReference>
<dbReference type="SMR" id="Q5M250"/>
<dbReference type="STRING" id="264199.stu2002"/>
<dbReference type="GeneID" id="66899728"/>
<dbReference type="KEGG" id="stl:stu2002"/>
<dbReference type="PATRIC" id="fig|264199.4.peg.1986"/>
<dbReference type="eggNOG" id="COG0445">
    <property type="taxonomic scope" value="Bacteria"/>
</dbReference>
<dbReference type="HOGENOM" id="CLU_007831_2_2_9"/>
<dbReference type="Proteomes" id="UP000001170">
    <property type="component" value="Chromosome"/>
</dbReference>
<dbReference type="GO" id="GO:0005829">
    <property type="term" value="C:cytosol"/>
    <property type="evidence" value="ECO:0007669"/>
    <property type="project" value="TreeGrafter"/>
</dbReference>
<dbReference type="GO" id="GO:0050660">
    <property type="term" value="F:flavin adenine dinucleotide binding"/>
    <property type="evidence" value="ECO:0007669"/>
    <property type="project" value="UniProtKB-UniRule"/>
</dbReference>
<dbReference type="GO" id="GO:0030488">
    <property type="term" value="P:tRNA methylation"/>
    <property type="evidence" value="ECO:0007669"/>
    <property type="project" value="TreeGrafter"/>
</dbReference>
<dbReference type="GO" id="GO:0002098">
    <property type="term" value="P:tRNA wobble uridine modification"/>
    <property type="evidence" value="ECO:0007669"/>
    <property type="project" value="InterPro"/>
</dbReference>
<dbReference type="FunFam" id="1.10.10.1800:FF:000001">
    <property type="entry name" value="tRNA uridine 5-carboxymethylaminomethyl modification enzyme MnmG"/>
    <property type="match status" value="1"/>
</dbReference>
<dbReference type="FunFam" id="1.10.150.570:FF:000001">
    <property type="entry name" value="tRNA uridine 5-carboxymethylaminomethyl modification enzyme MnmG"/>
    <property type="match status" value="1"/>
</dbReference>
<dbReference type="FunFam" id="3.50.50.60:FF:000002">
    <property type="entry name" value="tRNA uridine 5-carboxymethylaminomethyl modification enzyme MnmG"/>
    <property type="match status" value="1"/>
</dbReference>
<dbReference type="FunFam" id="3.50.50.60:FF:000063">
    <property type="entry name" value="tRNA uridine 5-carboxymethylaminomethyl modification enzyme MnmG"/>
    <property type="match status" value="1"/>
</dbReference>
<dbReference type="Gene3D" id="3.50.50.60">
    <property type="entry name" value="FAD/NAD(P)-binding domain"/>
    <property type="match status" value="2"/>
</dbReference>
<dbReference type="Gene3D" id="1.10.150.570">
    <property type="entry name" value="GidA associated domain, C-terminal subdomain"/>
    <property type="match status" value="1"/>
</dbReference>
<dbReference type="Gene3D" id="1.10.10.1800">
    <property type="entry name" value="tRNA uridine 5-carboxymethylaminomethyl modification enzyme MnmG/GidA"/>
    <property type="match status" value="1"/>
</dbReference>
<dbReference type="HAMAP" id="MF_00129">
    <property type="entry name" value="MnmG_GidA"/>
    <property type="match status" value="1"/>
</dbReference>
<dbReference type="InterPro" id="IPR036188">
    <property type="entry name" value="FAD/NAD-bd_sf"/>
</dbReference>
<dbReference type="InterPro" id="IPR049312">
    <property type="entry name" value="GIDA_C_N"/>
</dbReference>
<dbReference type="InterPro" id="IPR004416">
    <property type="entry name" value="MnmG"/>
</dbReference>
<dbReference type="InterPro" id="IPR002218">
    <property type="entry name" value="MnmG-rel"/>
</dbReference>
<dbReference type="InterPro" id="IPR020595">
    <property type="entry name" value="MnmG-rel_CS"/>
</dbReference>
<dbReference type="InterPro" id="IPR026904">
    <property type="entry name" value="MnmG_C"/>
</dbReference>
<dbReference type="InterPro" id="IPR047001">
    <property type="entry name" value="MnmG_C_subdom"/>
</dbReference>
<dbReference type="InterPro" id="IPR044920">
    <property type="entry name" value="MnmG_C_subdom_sf"/>
</dbReference>
<dbReference type="InterPro" id="IPR040131">
    <property type="entry name" value="MnmG_N"/>
</dbReference>
<dbReference type="NCBIfam" id="TIGR00136">
    <property type="entry name" value="mnmG_gidA"/>
    <property type="match status" value="1"/>
</dbReference>
<dbReference type="PANTHER" id="PTHR11806">
    <property type="entry name" value="GLUCOSE INHIBITED DIVISION PROTEIN A"/>
    <property type="match status" value="1"/>
</dbReference>
<dbReference type="PANTHER" id="PTHR11806:SF0">
    <property type="entry name" value="PROTEIN MTO1 HOMOLOG, MITOCHONDRIAL"/>
    <property type="match status" value="1"/>
</dbReference>
<dbReference type="Pfam" id="PF01134">
    <property type="entry name" value="GIDA"/>
    <property type="match status" value="1"/>
</dbReference>
<dbReference type="Pfam" id="PF21680">
    <property type="entry name" value="GIDA_C_1st"/>
    <property type="match status" value="1"/>
</dbReference>
<dbReference type="Pfam" id="PF13932">
    <property type="entry name" value="SAM_GIDA_C"/>
    <property type="match status" value="1"/>
</dbReference>
<dbReference type="PRINTS" id="PR00368">
    <property type="entry name" value="FADPNR"/>
</dbReference>
<dbReference type="PRINTS" id="PR00411">
    <property type="entry name" value="PNDRDTASEI"/>
</dbReference>
<dbReference type="SMART" id="SM01228">
    <property type="entry name" value="GIDA_assoc_3"/>
    <property type="match status" value="1"/>
</dbReference>
<dbReference type="SUPFAM" id="SSF51905">
    <property type="entry name" value="FAD/NAD(P)-binding domain"/>
    <property type="match status" value="1"/>
</dbReference>
<dbReference type="PROSITE" id="PS01280">
    <property type="entry name" value="GIDA_1"/>
    <property type="match status" value="1"/>
</dbReference>
<dbReference type="PROSITE" id="PS01281">
    <property type="entry name" value="GIDA_2"/>
    <property type="match status" value="1"/>
</dbReference>
<organism>
    <name type="scientific">Streptococcus thermophilus (strain ATCC BAA-250 / LMG 18311)</name>
    <dbReference type="NCBI Taxonomy" id="264199"/>
    <lineage>
        <taxon>Bacteria</taxon>
        <taxon>Bacillati</taxon>
        <taxon>Bacillota</taxon>
        <taxon>Bacilli</taxon>
        <taxon>Lactobacillales</taxon>
        <taxon>Streptococcaceae</taxon>
        <taxon>Streptococcus</taxon>
    </lineage>
</organism>
<evidence type="ECO:0000255" key="1">
    <source>
        <dbReference type="HAMAP-Rule" id="MF_00129"/>
    </source>
</evidence>
<evidence type="ECO:0000305" key="2"/>
<accession>Q5M250</accession>
<keyword id="KW-0963">Cytoplasm</keyword>
<keyword id="KW-0274">FAD</keyword>
<keyword id="KW-0285">Flavoprotein</keyword>
<keyword id="KW-0520">NAD</keyword>
<keyword id="KW-1185">Reference proteome</keyword>
<keyword id="KW-0819">tRNA processing</keyword>
<proteinExistence type="inferred from homology"/>
<feature type="chain" id="PRO_0000117193" description="tRNA uridine 5-carboxymethylaminomethyl modification enzyme MnmG">
    <location>
        <begin position="1"/>
        <end position="633"/>
    </location>
</feature>
<feature type="binding site" evidence="1">
    <location>
        <begin position="15"/>
        <end position="20"/>
    </location>
    <ligand>
        <name>FAD</name>
        <dbReference type="ChEBI" id="CHEBI:57692"/>
    </ligand>
</feature>
<feature type="binding site" evidence="1">
    <location>
        <position position="127"/>
    </location>
    <ligand>
        <name>FAD</name>
        <dbReference type="ChEBI" id="CHEBI:57692"/>
    </ligand>
</feature>
<feature type="binding site" evidence="1">
    <location>
        <position position="182"/>
    </location>
    <ligand>
        <name>FAD</name>
        <dbReference type="ChEBI" id="CHEBI:57692"/>
    </ligand>
</feature>
<feature type="binding site" evidence="1">
    <location>
        <begin position="276"/>
        <end position="290"/>
    </location>
    <ligand>
        <name>NAD(+)</name>
        <dbReference type="ChEBI" id="CHEBI:57540"/>
    </ligand>
</feature>
<feature type="binding site" evidence="1">
    <location>
        <position position="373"/>
    </location>
    <ligand>
        <name>FAD</name>
        <dbReference type="ChEBI" id="CHEBI:57692"/>
    </ligand>
</feature>
<comment type="function">
    <text evidence="1">NAD-binding protein involved in the addition of a carboxymethylaminomethyl (cmnm) group at the wobble position (U34) of certain tRNAs, forming tRNA-cmnm(5)s(2)U34.</text>
</comment>
<comment type="cofactor">
    <cofactor evidence="1">
        <name>FAD</name>
        <dbReference type="ChEBI" id="CHEBI:57692"/>
    </cofactor>
</comment>
<comment type="subunit">
    <text evidence="1">Homodimer. Heterotetramer of two MnmE and two MnmG subunits.</text>
</comment>
<comment type="subcellular location">
    <subcellularLocation>
        <location evidence="1">Cytoplasm</location>
    </subcellularLocation>
</comment>
<comment type="similarity">
    <text evidence="1">Belongs to the MnmG family.</text>
</comment>
<comment type="sequence caution" evidence="2">
    <conflict type="erroneous initiation">
        <sequence resource="EMBL-CDS" id="AAV61596"/>
    </conflict>
</comment>